<reference key="1">
    <citation type="submission" date="2005-08" db="EMBL/GenBank/DDBJ databases">
        <title>Complete sequence of chromosome 1 of Nitrosospira multiformis ATCC 25196.</title>
        <authorList>
            <person name="Copeland A."/>
            <person name="Lucas S."/>
            <person name="Lapidus A."/>
            <person name="Barry K."/>
            <person name="Detter J.C."/>
            <person name="Glavina T."/>
            <person name="Hammon N."/>
            <person name="Israni S."/>
            <person name="Pitluck S."/>
            <person name="Chain P."/>
            <person name="Malfatti S."/>
            <person name="Shin M."/>
            <person name="Vergez L."/>
            <person name="Schmutz J."/>
            <person name="Larimer F."/>
            <person name="Land M."/>
            <person name="Hauser L."/>
            <person name="Kyrpides N."/>
            <person name="Lykidis A."/>
            <person name="Richardson P."/>
        </authorList>
    </citation>
    <scope>NUCLEOTIDE SEQUENCE [LARGE SCALE GENOMIC DNA]</scope>
    <source>
        <strain>ATCC 25196 / NCIMB 11849 / C 71</strain>
    </source>
</reference>
<proteinExistence type="inferred from homology"/>
<feature type="chain" id="PRO_0000351890" description="Protein-L-isoaspartate O-methyltransferase 2">
    <location>
        <begin position="1"/>
        <end position="211"/>
    </location>
</feature>
<feature type="active site" evidence="1">
    <location>
        <position position="60"/>
    </location>
</feature>
<accession>Q2YBR7</accession>
<gene>
    <name evidence="1" type="primary">pcm2</name>
    <name type="ordered locus">Nmul_A0496</name>
</gene>
<sequence length="211" mass="23485">MTSQRTRARMVERLCTQGVTDEAVLTAMITVPRHIFVEEVLASRAYDDVALPINFEQTISNPFTVARMSQLLRAGSNPGKVLEIGTGSGYQTAILAQFSREVYSVERIGPLLTRTRGRLRELRINNVRLKHADGLLGLSEAAPFDGIILTAATPHMPPALLEQLAIRGRMVFPRGTSEQVLCVIERNLQGYTETILDEVKFVPMIPGIWQR</sequence>
<protein>
    <recommendedName>
        <fullName evidence="1">Protein-L-isoaspartate O-methyltransferase 2</fullName>
        <ecNumber evidence="1">2.1.1.77</ecNumber>
    </recommendedName>
    <alternativeName>
        <fullName evidence="1">L-isoaspartyl protein carboxyl methyltransferase 2</fullName>
    </alternativeName>
    <alternativeName>
        <fullName evidence="1">Protein L-isoaspartyl methyltransferase 2</fullName>
    </alternativeName>
    <alternativeName>
        <fullName evidence="1">Protein-beta-aspartate methyltransferase 2</fullName>
        <shortName evidence="1">PIMT 2</shortName>
    </alternativeName>
</protein>
<comment type="function">
    <text evidence="1">Catalyzes the methyl esterification of L-isoaspartyl residues in peptides and proteins that result from spontaneous decomposition of normal L-aspartyl and L-asparaginyl residues. It plays a role in the repair and/or degradation of damaged proteins.</text>
</comment>
<comment type="catalytic activity">
    <reaction evidence="1">
        <text>[protein]-L-isoaspartate + S-adenosyl-L-methionine = [protein]-L-isoaspartate alpha-methyl ester + S-adenosyl-L-homocysteine</text>
        <dbReference type="Rhea" id="RHEA:12705"/>
        <dbReference type="Rhea" id="RHEA-COMP:12143"/>
        <dbReference type="Rhea" id="RHEA-COMP:12144"/>
        <dbReference type="ChEBI" id="CHEBI:57856"/>
        <dbReference type="ChEBI" id="CHEBI:59789"/>
        <dbReference type="ChEBI" id="CHEBI:90596"/>
        <dbReference type="ChEBI" id="CHEBI:90598"/>
        <dbReference type="EC" id="2.1.1.77"/>
    </reaction>
</comment>
<comment type="subcellular location">
    <subcellularLocation>
        <location evidence="1">Cytoplasm</location>
    </subcellularLocation>
</comment>
<comment type="similarity">
    <text evidence="1">Belongs to the methyltransferase superfamily. L-isoaspartyl/D-aspartyl protein methyltransferase family.</text>
</comment>
<organism>
    <name type="scientific">Nitrosospira multiformis (strain ATCC 25196 / NCIMB 11849 / C 71)</name>
    <dbReference type="NCBI Taxonomy" id="323848"/>
    <lineage>
        <taxon>Bacteria</taxon>
        <taxon>Pseudomonadati</taxon>
        <taxon>Pseudomonadota</taxon>
        <taxon>Betaproteobacteria</taxon>
        <taxon>Nitrosomonadales</taxon>
        <taxon>Nitrosomonadaceae</taxon>
        <taxon>Nitrosospira</taxon>
    </lineage>
</organism>
<keyword id="KW-0963">Cytoplasm</keyword>
<keyword id="KW-0489">Methyltransferase</keyword>
<keyword id="KW-1185">Reference proteome</keyword>
<keyword id="KW-0949">S-adenosyl-L-methionine</keyword>
<keyword id="KW-0808">Transferase</keyword>
<dbReference type="EC" id="2.1.1.77" evidence="1"/>
<dbReference type="EMBL" id="CP000103">
    <property type="protein sequence ID" value="ABB73804.1"/>
    <property type="molecule type" value="Genomic_DNA"/>
</dbReference>
<dbReference type="SMR" id="Q2YBR7"/>
<dbReference type="STRING" id="323848.Nmul_A0496"/>
<dbReference type="KEGG" id="nmu:Nmul_A0496"/>
<dbReference type="eggNOG" id="COG2518">
    <property type="taxonomic scope" value="Bacteria"/>
</dbReference>
<dbReference type="HOGENOM" id="CLU_055432_2_0_4"/>
<dbReference type="Proteomes" id="UP000002718">
    <property type="component" value="Chromosome"/>
</dbReference>
<dbReference type="GO" id="GO:0005737">
    <property type="term" value="C:cytoplasm"/>
    <property type="evidence" value="ECO:0007669"/>
    <property type="project" value="UniProtKB-SubCell"/>
</dbReference>
<dbReference type="GO" id="GO:0004719">
    <property type="term" value="F:protein-L-isoaspartate (D-aspartate) O-methyltransferase activity"/>
    <property type="evidence" value="ECO:0007669"/>
    <property type="project" value="UniProtKB-UniRule"/>
</dbReference>
<dbReference type="GO" id="GO:0032259">
    <property type="term" value="P:methylation"/>
    <property type="evidence" value="ECO:0007669"/>
    <property type="project" value="UniProtKB-KW"/>
</dbReference>
<dbReference type="GO" id="GO:0036211">
    <property type="term" value="P:protein modification process"/>
    <property type="evidence" value="ECO:0007669"/>
    <property type="project" value="UniProtKB-UniRule"/>
</dbReference>
<dbReference type="GO" id="GO:0030091">
    <property type="term" value="P:protein repair"/>
    <property type="evidence" value="ECO:0007669"/>
    <property type="project" value="UniProtKB-UniRule"/>
</dbReference>
<dbReference type="CDD" id="cd02440">
    <property type="entry name" value="AdoMet_MTases"/>
    <property type="match status" value="1"/>
</dbReference>
<dbReference type="FunFam" id="3.40.50.150:FF:000010">
    <property type="entry name" value="Protein-L-isoaspartate O-methyltransferase"/>
    <property type="match status" value="1"/>
</dbReference>
<dbReference type="Gene3D" id="3.40.50.150">
    <property type="entry name" value="Vaccinia Virus protein VP39"/>
    <property type="match status" value="1"/>
</dbReference>
<dbReference type="HAMAP" id="MF_00090">
    <property type="entry name" value="PIMT"/>
    <property type="match status" value="1"/>
</dbReference>
<dbReference type="InterPro" id="IPR000682">
    <property type="entry name" value="PCMT"/>
</dbReference>
<dbReference type="InterPro" id="IPR029063">
    <property type="entry name" value="SAM-dependent_MTases_sf"/>
</dbReference>
<dbReference type="NCBIfam" id="TIGR00080">
    <property type="entry name" value="pimt"/>
    <property type="match status" value="1"/>
</dbReference>
<dbReference type="NCBIfam" id="NF001453">
    <property type="entry name" value="PRK00312.1"/>
    <property type="match status" value="1"/>
</dbReference>
<dbReference type="PANTHER" id="PTHR11579">
    <property type="entry name" value="PROTEIN-L-ISOASPARTATE O-METHYLTRANSFERASE"/>
    <property type="match status" value="1"/>
</dbReference>
<dbReference type="PANTHER" id="PTHR11579:SF0">
    <property type="entry name" value="PROTEIN-L-ISOASPARTATE(D-ASPARTATE) O-METHYLTRANSFERASE"/>
    <property type="match status" value="1"/>
</dbReference>
<dbReference type="Pfam" id="PF01135">
    <property type="entry name" value="PCMT"/>
    <property type="match status" value="1"/>
</dbReference>
<dbReference type="SUPFAM" id="SSF53335">
    <property type="entry name" value="S-adenosyl-L-methionine-dependent methyltransferases"/>
    <property type="match status" value="1"/>
</dbReference>
<dbReference type="PROSITE" id="PS01279">
    <property type="entry name" value="PCMT"/>
    <property type="match status" value="1"/>
</dbReference>
<name>PIMT2_NITMU</name>
<evidence type="ECO:0000255" key="1">
    <source>
        <dbReference type="HAMAP-Rule" id="MF_00090"/>
    </source>
</evidence>